<name>ARO1_ARTOC</name>
<organism>
    <name type="scientific">Arthroderma otae (strain ATCC MYA-4605 / CBS 113480)</name>
    <name type="common">Microsporum canis</name>
    <dbReference type="NCBI Taxonomy" id="554155"/>
    <lineage>
        <taxon>Eukaryota</taxon>
        <taxon>Fungi</taxon>
        <taxon>Dikarya</taxon>
        <taxon>Ascomycota</taxon>
        <taxon>Pezizomycotina</taxon>
        <taxon>Eurotiomycetes</taxon>
        <taxon>Eurotiomycetidae</taxon>
        <taxon>Onygenales</taxon>
        <taxon>Arthrodermataceae</taxon>
        <taxon>Microsporum</taxon>
    </lineage>
</organism>
<keyword id="KW-0028">Amino-acid biosynthesis</keyword>
<keyword id="KW-0057">Aromatic amino acid biosynthesis</keyword>
<keyword id="KW-0067">ATP-binding</keyword>
<keyword id="KW-0963">Cytoplasm</keyword>
<keyword id="KW-0418">Kinase</keyword>
<keyword id="KW-0456">Lyase</keyword>
<keyword id="KW-0479">Metal-binding</keyword>
<keyword id="KW-0511">Multifunctional enzyme</keyword>
<keyword id="KW-0521">NADP</keyword>
<keyword id="KW-0547">Nucleotide-binding</keyword>
<keyword id="KW-0560">Oxidoreductase</keyword>
<keyword id="KW-1185">Reference proteome</keyword>
<keyword id="KW-0808">Transferase</keyword>
<keyword id="KW-0862">Zinc</keyword>
<evidence type="ECO:0000255" key="1">
    <source>
        <dbReference type="HAMAP-Rule" id="MF_03143"/>
    </source>
</evidence>
<comment type="function">
    <text evidence="1">The AROM polypeptide catalyzes 5 consecutive enzymatic reactions in prechorismate polyaromatic amino acid biosynthesis.</text>
</comment>
<comment type="catalytic activity">
    <reaction evidence="1">
        <text>7-phospho-2-dehydro-3-deoxy-D-arabino-heptonate = 3-dehydroquinate + phosphate</text>
        <dbReference type="Rhea" id="RHEA:21968"/>
        <dbReference type="ChEBI" id="CHEBI:32364"/>
        <dbReference type="ChEBI" id="CHEBI:43474"/>
        <dbReference type="ChEBI" id="CHEBI:58394"/>
        <dbReference type="EC" id="4.2.3.4"/>
    </reaction>
</comment>
<comment type="catalytic activity">
    <reaction evidence="1">
        <text>3-dehydroquinate = 3-dehydroshikimate + H2O</text>
        <dbReference type="Rhea" id="RHEA:21096"/>
        <dbReference type="ChEBI" id="CHEBI:15377"/>
        <dbReference type="ChEBI" id="CHEBI:16630"/>
        <dbReference type="ChEBI" id="CHEBI:32364"/>
        <dbReference type="EC" id="4.2.1.10"/>
    </reaction>
</comment>
<comment type="catalytic activity">
    <reaction evidence="1">
        <text>shikimate + NADP(+) = 3-dehydroshikimate + NADPH + H(+)</text>
        <dbReference type="Rhea" id="RHEA:17737"/>
        <dbReference type="ChEBI" id="CHEBI:15378"/>
        <dbReference type="ChEBI" id="CHEBI:16630"/>
        <dbReference type="ChEBI" id="CHEBI:36208"/>
        <dbReference type="ChEBI" id="CHEBI:57783"/>
        <dbReference type="ChEBI" id="CHEBI:58349"/>
        <dbReference type="EC" id="1.1.1.25"/>
    </reaction>
</comment>
<comment type="catalytic activity">
    <reaction evidence="1">
        <text>shikimate + ATP = 3-phosphoshikimate + ADP + H(+)</text>
        <dbReference type="Rhea" id="RHEA:13121"/>
        <dbReference type="ChEBI" id="CHEBI:15378"/>
        <dbReference type="ChEBI" id="CHEBI:30616"/>
        <dbReference type="ChEBI" id="CHEBI:36208"/>
        <dbReference type="ChEBI" id="CHEBI:145989"/>
        <dbReference type="ChEBI" id="CHEBI:456216"/>
        <dbReference type="EC" id="2.7.1.71"/>
    </reaction>
</comment>
<comment type="catalytic activity">
    <reaction evidence="1">
        <text>3-phosphoshikimate + phosphoenolpyruvate = 5-O-(1-carboxyvinyl)-3-phosphoshikimate + phosphate</text>
        <dbReference type="Rhea" id="RHEA:21256"/>
        <dbReference type="ChEBI" id="CHEBI:43474"/>
        <dbReference type="ChEBI" id="CHEBI:57701"/>
        <dbReference type="ChEBI" id="CHEBI:58702"/>
        <dbReference type="ChEBI" id="CHEBI:145989"/>
        <dbReference type="EC" id="2.5.1.19"/>
    </reaction>
</comment>
<comment type="cofactor">
    <cofactor>
        <name>Zn(2+)</name>
        <dbReference type="ChEBI" id="CHEBI:29105"/>
    </cofactor>
    <text>Binds 2 Zn(2+) ions per subunit.</text>
</comment>
<comment type="pathway">
    <text evidence="1">Metabolic intermediate biosynthesis; chorismate biosynthesis; chorismate from D-erythrose 4-phosphate and phosphoenolpyruvate: step 2/7.</text>
</comment>
<comment type="pathway">
    <text evidence="1">Metabolic intermediate biosynthesis; chorismate biosynthesis; chorismate from D-erythrose 4-phosphate and phosphoenolpyruvate: step 3/7.</text>
</comment>
<comment type="pathway">
    <text evidence="1">Metabolic intermediate biosynthesis; chorismate biosynthesis; chorismate from D-erythrose 4-phosphate and phosphoenolpyruvate: step 4/7.</text>
</comment>
<comment type="pathway">
    <text evidence="1">Metabolic intermediate biosynthesis; chorismate biosynthesis; chorismate from D-erythrose 4-phosphate and phosphoenolpyruvate: step 5/7.</text>
</comment>
<comment type="pathway">
    <text evidence="1">Metabolic intermediate biosynthesis; chorismate biosynthesis; chorismate from D-erythrose 4-phosphate and phosphoenolpyruvate: step 6/7.</text>
</comment>
<comment type="subunit">
    <text evidence="1">Homodimer.</text>
</comment>
<comment type="subcellular location">
    <subcellularLocation>
        <location evidence="1">Cytoplasm</location>
    </subcellularLocation>
</comment>
<comment type="similarity">
    <text evidence="1">In the N-terminal section; belongs to the sugar phosphate cyclases superfamily. Dehydroquinate synthase family.</text>
</comment>
<comment type="similarity">
    <text evidence="1">In the 2nd section; belongs to the EPSP synthase family.</text>
</comment>
<comment type="similarity">
    <text evidence="1">In the 3rd section; belongs to the shikimate kinase family.</text>
</comment>
<comment type="similarity">
    <text evidence="1">In the 4th section; belongs to the type-I 3-dehydroquinase family.</text>
</comment>
<comment type="similarity">
    <text evidence="1">In the C-terminal section; belongs to the shikimate dehydrogenase family.</text>
</comment>
<gene>
    <name type="ORF">MCYG_04845</name>
</gene>
<dbReference type="EC" id="4.2.3.4" evidence="1"/>
<dbReference type="EC" id="2.5.1.19" evidence="1"/>
<dbReference type="EC" id="2.7.1.71" evidence="1"/>
<dbReference type="EC" id="4.2.1.10" evidence="1"/>
<dbReference type="EC" id="1.1.1.25" evidence="1"/>
<dbReference type="EMBL" id="DS995704">
    <property type="protein sequence ID" value="EEQ32026.1"/>
    <property type="molecule type" value="Genomic_DNA"/>
</dbReference>
<dbReference type="RefSeq" id="XP_002847108.1">
    <property type="nucleotide sequence ID" value="XM_002847062.1"/>
</dbReference>
<dbReference type="SMR" id="C5FQ73"/>
<dbReference type="STRING" id="554155.C5FQ73"/>
<dbReference type="GeneID" id="9226122"/>
<dbReference type="VEuPathDB" id="FungiDB:MCYG_04845"/>
<dbReference type="eggNOG" id="KOG0692">
    <property type="taxonomic scope" value="Eukaryota"/>
</dbReference>
<dbReference type="HOGENOM" id="CLU_001201_1_2_1"/>
<dbReference type="OMA" id="SWANMSW"/>
<dbReference type="OrthoDB" id="197068at2759"/>
<dbReference type="UniPathway" id="UPA00053">
    <property type="reaction ID" value="UER00085"/>
</dbReference>
<dbReference type="UniPathway" id="UPA00053">
    <property type="reaction ID" value="UER00086"/>
</dbReference>
<dbReference type="UniPathway" id="UPA00053">
    <property type="reaction ID" value="UER00087"/>
</dbReference>
<dbReference type="UniPathway" id="UPA00053">
    <property type="reaction ID" value="UER00088"/>
</dbReference>
<dbReference type="UniPathway" id="UPA00053">
    <property type="reaction ID" value="UER00089"/>
</dbReference>
<dbReference type="Proteomes" id="UP000002035">
    <property type="component" value="Unassembled WGS sequence"/>
</dbReference>
<dbReference type="GO" id="GO:0005737">
    <property type="term" value="C:cytoplasm"/>
    <property type="evidence" value="ECO:0007669"/>
    <property type="project" value="UniProtKB-SubCell"/>
</dbReference>
<dbReference type="GO" id="GO:0003855">
    <property type="term" value="F:3-dehydroquinate dehydratase activity"/>
    <property type="evidence" value="ECO:0007669"/>
    <property type="project" value="UniProtKB-UniRule"/>
</dbReference>
<dbReference type="GO" id="GO:0003856">
    <property type="term" value="F:3-dehydroquinate synthase activity"/>
    <property type="evidence" value="ECO:0007669"/>
    <property type="project" value="UniProtKB-UniRule"/>
</dbReference>
<dbReference type="GO" id="GO:0003866">
    <property type="term" value="F:3-phosphoshikimate 1-carboxyvinyltransferase activity"/>
    <property type="evidence" value="ECO:0007669"/>
    <property type="project" value="UniProtKB-UniRule"/>
</dbReference>
<dbReference type="GO" id="GO:0005524">
    <property type="term" value="F:ATP binding"/>
    <property type="evidence" value="ECO:0007669"/>
    <property type="project" value="UniProtKB-UniRule"/>
</dbReference>
<dbReference type="GO" id="GO:0046872">
    <property type="term" value="F:metal ion binding"/>
    <property type="evidence" value="ECO:0007669"/>
    <property type="project" value="UniProtKB-UniRule"/>
</dbReference>
<dbReference type="GO" id="GO:0004764">
    <property type="term" value="F:shikimate 3-dehydrogenase (NADP+) activity"/>
    <property type="evidence" value="ECO:0007669"/>
    <property type="project" value="UniProtKB-UniRule"/>
</dbReference>
<dbReference type="GO" id="GO:0004765">
    <property type="term" value="F:shikimate kinase activity"/>
    <property type="evidence" value="ECO:0007669"/>
    <property type="project" value="UniProtKB-UniRule"/>
</dbReference>
<dbReference type="GO" id="GO:0008652">
    <property type="term" value="P:amino acid biosynthetic process"/>
    <property type="evidence" value="ECO:0007669"/>
    <property type="project" value="UniProtKB-KW"/>
</dbReference>
<dbReference type="GO" id="GO:0009073">
    <property type="term" value="P:aromatic amino acid family biosynthetic process"/>
    <property type="evidence" value="ECO:0007669"/>
    <property type="project" value="UniProtKB-UniRule"/>
</dbReference>
<dbReference type="GO" id="GO:0009423">
    <property type="term" value="P:chorismate biosynthetic process"/>
    <property type="evidence" value="ECO:0007669"/>
    <property type="project" value="UniProtKB-UniRule"/>
</dbReference>
<dbReference type="CDD" id="cd00502">
    <property type="entry name" value="DHQase_I"/>
    <property type="match status" value="1"/>
</dbReference>
<dbReference type="CDD" id="cd08195">
    <property type="entry name" value="DHQS"/>
    <property type="match status" value="1"/>
</dbReference>
<dbReference type="CDD" id="cd01556">
    <property type="entry name" value="EPSP_synthase"/>
    <property type="match status" value="1"/>
</dbReference>
<dbReference type="CDD" id="cd01065">
    <property type="entry name" value="NAD_bind_Shikimate_DH"/>
    <property type="match status" value="1"/>
</dbReference>
<dbReference type="CDD" id="cd00464">
    <property type="entry name" value="SK"/>
    <property type="match status" value="1"/>
</dbReference>
<dbReference type="FunFam" id="1.20.1090.10:FF:000007">
    <property type="entry name" value="Pentafunctional AROM polypeptide"/>
    <property type="match status" value="1"/>
</dbReference>
<dbReference type="FunFam" id="3.20.20.70:FF:000135">
    <property type="entry name" value="Pentafunctional AROM polypeptide"/>
    <property type="match status" value="1"/>
</dbReference>
<dbReference type="FunFam" id="3.40.50.1970:FF:000007">
    <property type="entry name" value="Pentafunctional AROM polypeptide"/>
    <property type="match status" value="1"/>
</dbReference>
<dbReference type="FunFam" id="3.40.50.300:FF:001256">
    <property type="entry name" value="Pentafunctional AROM polypeptide"/>
    <property type="match status" value="1"/>
</dbReference>
<dbReference type="FunFam" id="3.65.10.10:FF:000007">
    <property type="entry name" value="Pentafunctional AROM polypeptide"/>
    <property type="match status" value="1"/>
</dbReference>
<dbReference type="FunFam" id="3.65.10.10:FF:000008">
    <property type="entry name" value="Pentafunctional AROM polypeptide"/>
    <property type="match status" value="1"/>
</dbReference>
<dbReference type="Gene3D" id="3.40.50.1970">
    <property type="match status" value="1"/>
</dbReference>
<dbReference type="Gene3D" id="3.20.20.70">
    <property type="entry name" value="Aldolase class I"/>
    <property type="match status" value="1"/>
</dbReference>
<dbReference type="Gene3D" id="1.20.1090.10">
    <property type="entry name" value="Dehydroquinate synthase-like - alpha domain"/>
    <property type="match status" value="1"/>
</dbReference>
<dbReference type="Gene3D" id="3.65.10.10">
    <property type="entry name" value="Enolpyruvate transferase domain"/>
    <property type="match status" value="2"/>
</dbReference>
<dbReference type="Gene3D" id="3.40.50.10860">
    <property type="entry name" value="Leucine Dehydrogenase, chain A, domain 1"/>
    <property type="match status" value="1"/>
</dbReference>
<dbReference type="Gene3D" id="3.40.50.720">
    <property type="entry name" value="NAD(P)-binding Rossmann-like Domain"/>
    <property type="match status" value="1"/>
</dbReference>
<dbReference type="Gene3D" id="3.40.50.300">
    <property type="entry name" value="P-loop containing nucleotide triphosphate hydrolases"/>
    <property type="match status" value="1"/>
</dbReference>
<dbReference type="HAMAP" id="MF_00210">
    <property type="entry name" value="EPSP_synth"/>
    <property type="match status" value="1"/>
</dbReference>
<dbReference type="HAMAP" id="MF_03143">
    <property type="entry name" value="Pentafunct_AroM"/>
    <property type="match status" value="1"/>
</dbReference>
<dbReference type="HAMAP" id="MF_00109">
    <property type="entry name" value="Shikimate_kinase"/>
    <property type="match status" value="1"/>
</dbReference>
<dbReference type="InterPro" id="IPR018508">
    <property type="entry name" value="3-dehydroquinate_DH_AS"/>
</dbReference>
<dbReference type="InterPro" id="IPR013785">
    <property type="entry name" value="Aldolase_TIM"/>
</dbReference>
<dbReference type="InterPro" id="IPR046346">
    <property type="entry name" value="Aminoacid_DH-like_N_sf"/>
</dbReference>
<dbReference type="InterPro" id="IPR016037">
    <property type="entry name" value="DHQ_synth_AroB"/>
</dbReference>
<dbReference type="InterPro" id="IPR030960">
    <property type="entry name" value="DHQS/DOIS_N"/>
</dbReference>
<dbReference type="InterPro" id="IPR056179">
    <property type="entry name" value="DHQS_C"/>
</dbReference>
<dbReference type="InterPro" id="IPR001381">
    <property type="entry name" value="DHquinase_I"/>
</dbReference>
<dbReference type="InterPro" id="IPR001986">
    <property type="entry name" value="Enolpyruvate_Tfrase_dom"/>
</dbReference>
<dbReference type="InterPro" id="IPR036968">
    <property type="entry name" value="Enolpyruvate_Tfrase_sf"/>
</dbReference>
<dbReference type="InterPro" id="IPR006264">
    <property type="entry name" value="EPSP_synthase"/>
</dbReference>
<dbReference type="InterPro" id="IPR023193">
    <property type="entry name" value="EPSP_synthase_CS"/>
</dbReference>
<dbReference type="InterPro" id="IPR036291">
    <property type="entry name" value="NAD(P)-bd_dom_sf"/>
</dbReference>
<dbReference type="InterPro" id="IPR027417">
    <property type="entry name" value="P-loop_NTPase"/>
</dbReference>
<dbReference type="InterPro" id="IPR008289">
    <property type="entry name" value="Pentafunct_AroM"/>
</dbReference>
<dbReference type="InterPro" id="IPR013792">
    <property type="entry name" value="RNA3'P_cycl/enolpyr_Trfase_a/b"/>
</dbReference>
<dbReference type="InterPro" id="IPR041121">
    <property type="entry name" value="SDH_C"/>
</dbReference>
<dbReference type="InterPro" id="IPR031322">
    <property type="entry name" value="Shikimate/glucono_kinase"/>
</dbReference>
<dbReference type="InterPro" id="IPR013708">
    <property type="entry name" value="Shikimate_DH-bd_N"/>
</dbReference>
<dbReference type="InterPro" id="IPR010110">
    <property type="entry name" value="Shikimate_DH_AroM-type"/>
</dbReference>
<dbReference type="InterPro" id="IPR000623">
    <property type="entry name" value="Shikimate_kinase/TSH1"/>
</dbReference>
<dbReference type="InterPro" id="IPR023000">
    <property type="entry name" value="Shikimate_kinase_CS"/>
</dbReference>
<dbReference type="NCBIfam" id="TIGR01356">
    <property type="entry name" value="aroA"/>
    <property type="match status" value="1"/>
</dbReference>
<dbReference type="NCBIfam" id="TIGR01357">
    <property type="entry name" value="aroB"/>
    <property type="match status" value="1"/>
</dbReference>
<dbReference type="NCBIfam" id="TIGR01093">
    <property type="entry name" value="aroD"/>
    <property type="match status" value="1"/>
</dbReference>
<dbReference type="NCBIfam" id="TIGR01809">
    <property type="entry name" value="Shik-DH-AROM"/>
    <property type="match status" value="1"/>
</dbReference>
<dbReference type="PANTHER" id="PTHR21090">
    <property type="entry name" value="AROM/DEHYDROQUINATE SYNTHASE"/>
    <property type="match status" value="1"/>
</dbReference>
<dbReference type="PANTHER" id="PTHR21090:SF5">
    <property type="entry name" value="PENTAFUNCTIONAL AROM POLYPEPTIDE"/>
    <property type="match status" value="1"/>
</dbReference>
<dbReference type="Pfam" id="PF01761">
    <property type="entry name" value="DHQ_synthase"/>
    <property type="match status" value="1"/>
</dbReference>
<dbReference type="Pfam" id="PF24621">
    <property type="entry name" value="DHQS_C"/>
    <property type="match status" value="1"/>
</dbReference>
<dbReference type="Pfam" id="PF01487">
    <property type="entry name" value="DHquinase_I"/>
    <property type="match status" value="1"/>
</dbReference>
<dbReference type="Pfam" id="PF00275">
    <property type="entry name" value="EPSP_synthase"/>
    <property type="match status" value="1"/>
</dbReference>
<dbReference type="Pfam" id="PF18317">
    <property type="entry name" value="SDH_C"/>
    <property type="match status" value="1"/>
</dbReference>
<dbReference type="Pfam" id="PF08501">
    <property type="entry name" value="Shikimate_dh_N"/>
    <property type="match status" value="1"/>
</dbReference>
<dbReference type="Pfam" id="PF01202">
    <property type="entry name" value="SKI"/>
    <property type="match status" value="1"/>
</dbReference>
<dbReference type="PIRSF" id="PIRSF000514">
    <property type="entry name" value="Pentafunct_AroM"/>
    <property type="match status" value="1"/>
</dbReference>
<dbReference type="PRINTS" id="PR01100">
    <property type="entry name" value="SHIKIMTKNASE"/>
</dbReference>
<dbReference type="SUPFAM" id="SSF51569">
    <property type="entry name" value="Aldolase"/>
    <property type="match status" value="1"/>
</dbReference>
<dbReference type="SUPFAM" id="SSF53223">
    <property type="entry name" value="Aminoacid dehydrogenase-like, N-terminal domain"/>
    <property type="match status" value="1"/>
</dbReference>
<dbReference type="SUPFAM" id="SSF56796">
    <property type="entry name" value="Dehydroquinate synthase-like"/>
    <property type="match status" value="1"/>
</dbReference>
<dbReference type="SUPFAM" id="SSF55205">
    <property type="entry name" value="EPT/RTPC-like"/>
    <property type="match status" value="1"/>
</dbReference>
<dbReference type="SUPFAM" id="SSF51735">
    <property type="entry name" value="NAD(P)-binding Rossmann-fold domains"/>
    <property type="match status" value="1"/>
</dbReference>
<dbReference type="SUPFAM" id="SSF52540">
    <property type="entry name" value="P-loop containing nucleoside triphosphate hydrolases"/>
    <property type="match status" value="1"/>
</dbReference>
<dbReference type="PROSITE" id="PS01028">
    <property type="entry name" value="DEHYDROQUINASE_I"/>
    <property type="match status" value="1"/>
</dbReference>
<dbReference type="PROSITE" id="PS00104">
    <property type="entry name" value="EPSP_SYNTHASE_1"/>
    <property type="match status" value="1"/>
</dbReference>
<dbReference type="PROSITE" id="PS00885">
    <property type="entry name" value="EPSP_SYNTHASE_2"/>
    <property type="match status" value="1"/>
</dbReference>
<dbReference type="PROSITE" id="PS01128">
    <property type="entry name" value="SHIKIMATE_KINASE"/>
    <property type="match status" value="1"/>
</dbReference>
<protein>
    <recommendedName>
        <fullName evidence="1">Pentafunctional AROM polypeptide</fullName>
    </recommendedName>
    <domain>
        <recommendedName>
            <fullName evidence="1">3-dehydroquinate synthase</fullName>
            <shortName evidence="1">DHQS</shortName>
            <ecNumber evidence="1">4.2.3.4</ecNumber>
        </recommendedName>
    </domain>
    <domain>
        <recommendedName>
            <fullName evidence="1">3-phosphoshikimate 1-carboxyvinyltransferase</fullName>
            <ecNumber evidence="1">2.5.1.19</ecNumber>
        </recommendedName>
        <alternativeName>
            <fullName evidence="1">5-enolpyruvylshikimate-3-phosphate synthase</fullName>
            <shortName evidence="1">EPSP synthase</shortName>
            <shortName evidence="1">EPSPS</shortName>
        </alternativeName>
    </domain>
    <domain>
        <recommendedName>
            <fullName evidence="1">Shikimate kinase</fullName>
            <shortName evidence="1">SK</shortName>
            <ecNumber evidence="1">2.7.1.71</ecNumber>
        </recommendedName>
    </domain>
    <domain>
        <recommendedName>
            <fullName evidence="1">3-dehydroquinate dehydratase</fullName>
            <shortName evidence="1">3-dehydroquinase</shortName>
            <ecNumber evidence="1">4.2.1.10</ecNumber>
        </recommendedName>
    </domain>
    <domain>
        <recommendedName>
            <fullName evidence="1">Shikimate dehydrogenase</fullName>
            <ecNumber evidence="1">1.1.1.25</ecNumber>
        </recommendedName>
    </domain>
</protein>
<feature type="chain" id="PRO_0000406724" description="Pentafunctional AROM polypeptide">
    <location>
        <begin position="1"/>
        <end position="1571"/>
    </location>
</feature>
<feature type="region of interest" description="3-dehydroquinate synthase">
    <location>
        <begin position="1"/>
        <end position="384"/>
    </location>
</feature>
<feature type="region of interest" description="EPSP synthase">
    <location>
        <begin position="397"/>
        <end position="843"/>
    </location>
</feature>
<feature type="region of interest" description="Shikimate kinase">
    <location>
        <begin position="866"/>
        <end position="1057"/>
    </location>
</feature>
<feature type="region of interest" description="3-dehydroquinase">
    <location>
        <begin position="1058"/>
        <end position="1278"/>
    </location>
</feature>
<feature type="region of interest" description="Shikimate dehydrogenase">
    <location>
        <begin position="1291"/>
        <end position="1571"/>
    </location>
</feature>
<feature type="active site" description="Proton acceptor; for 3-dehydroquinate synthase activity" evidence="1">
    <location>
        <position position="260"/>
    </location>
</feature>
<feature type="active site" description="Proton acceptor; for 3-dehydroquinate synthase activity" evidence="1">
    <location>
        <position position="275"/>
    </location>
</feature>
<feature type="active site" description="For EPSP synthase activity" evidence="1">
    <location>
        <position position="825"/>
    </location>
</feature>
<feature type="active site" description="Proton acceptor; for 3-dehydroquinate dehydratase activity" evidence="1">
    <location>
        <position position="1181"/>
    </location>
</feature>
<feature type="active site" description="Schiff-base intermediate with substrate; for 3-dehydroquinate dehydratase activity" evidence="1">
    <location>
        <position position="1209"/>
    </location>
</feature>
<feature type="binding site" evidence="1">
    <location>
        <begin position="44"/>
        <end position="46"/>
    </location>
    <ligand>
        <name>NAD(+)</name>
        <dbReference type="ChEBI" id="CHEBI:57540"/>
    </ligand>
</feature>
<feature type="binding site" evidence="1">
    <location>
        <begin position="81"/>
        <end position="84"/>
    </location>
    <ligand>
        <name>NAD(+)</name>
        <dbReference type="ChEBI" id="CHEBI:57540"/>
    </ligand>
</feature>
<feature type="binding site" evidence="1">
    <location>
        <begin position="114"/>
        <end position="116"/>
    </location>
    <ligand>
        <name>NAD(+)</name>
        <dbReference type="ChEBI" id="CHEBI:57540"/>
    </ligand>
</feature>
<feature type="binding site" evidence="1">
    <location>
        <position position="119"/>
    </location>
    <ligand>
        <name>NAD(+)</name>
        <dbReference type="ChEBI" id="CHEBI:57540"/>
    </ligand>
</feature>
<feature type="binding site" evidence="1">
    <location>
        <position position="130"/>
    </location>
    <ligand>
        <name>7-phospho-2-dehydro-3-deoxy-D-arabino-heptonate</name>
        <dbReference type="ChEBI" id="CHEBI:58394"/>
    </ligand>
</feature>
<feature type="binding site" evidence="1">
    <location>
        <begin position="139"/>
        <end position="140"/>
    </location>
    <ligand>
        <name>NAD(+)</name>
        <dbReference type="ChEBI" id="CHEBI:57540"/>
    </ligand>
</feature>
<feature type="binding site" evidence="1">
    <location>
        <position position="146"/>
    </location>
    <ligand>
        <name>7-phospho-2-dehydro-3-deoxy-D-arabino-heptonate</name>
        <dbReference type="ChEBI" id="CHEBI:58394"/>
    </ligand>
</feature>
<feature type="binding site" evidence="1">
    <location>
        <position position="152"/>
    </location>
    <ligand>
        <name>7-phospho-2-dehydro-3-deoxy-D-arabino-heptonate</name>
        <dbReference type="ChEBI" id="CHEBI:58394"/>
    </ligand>
</feature>
<feature type="binding site" evidence="1">
    <location>
        <position position="161"/>
    </location>
    <ligand>
        <name>NAD(+)</name>
        <dbReference type="ChEBI" id="CHEBI:57540"/>
    </ligand>
</feature>
<feature type="binding site" evidence="1">
    <location>
        <position position="162"/>
    </location>
    <ligand>
        <name>7-phospho-2-dehydro-3-deoxy-D-arabino-heptonate</name>
        <dbReference type="ChEBI" id="CHEBI:58394"/>
    </ligand>
</feature>
<feature type="binding site" evidence="1">
    <location>
        <begin position="179"/>
        <end position="182"/>
    </location>
    <ligand>
        <name>NAD(+)</name>
        <dbReference type="ChEBI" id="CHEBI:57540"/>
    </ligand>
</feature>
<feature type="binding site" evidence="1">
    <location>
        <position position="190"/>
    </location>
    <ligand>
        <name>NAD(+)</name>
        <dbReference type="ChEBI" id="CHEBI:57540"/>
    </ligand>
</feature>
<feature type="binding site" evidence="1">
    <location>
        <begin position="194"/>
        <end position="197"/>
    </location>
    <ligand>
        <name>7-phospho-2-dehydro-3-deoxy-D-arabino-heptonate</name>
        <dbReference type="ChEBI" id="CHEBI:58394"/>
    </ligand>
</feature>
<feature type="binding site" evidence="1">
    <location>
        <position position="194"/>
    </location>
    <ligand>
        <name>Zn(2+)</name>
        <dbReference type="ChEBI" id="CHEBI:29105"/>
        <note>catalytic</note>
    </ligand>
</feature>
<feature type="binding site" evidence="1">
    <location>
        <position position="250"/>
    </location>
    <ligand>
        <name>7-phospho-2-dehydro-3-deoxy-D-arabino-heptonate</name>
        <dbReference type="ChEBI" id="CHEBI:58394"/>
    </ligand>
</feature>
<feature type="binding site" evidence="1">
    <location>
        <begin position="264"/>
        <end position="268"/>
    </location>
    <ligand>
        <name>7-phospho-2-dehydro-3-deoxy-D-arabino-heptonate</name>
        <dbReference type="ChEBI" id="CHEBI:58394"/>
    </ligand>
</feature>
<feature type="binding site" evidence="1">
    <location>
        <position position="271"/>
    </location>
    <ligand>
        <name>7-phospho-2-dehydro-3-deoxy-D-arabino-heptonate</name>
        <dbReference type="ChEBI" id="CHEBI:58394"/>
    </ligand>
</feature>
<feature type="binding site" evidence="1">
    <location>
        <position position="271"/>
    </location>
    <ligand>
        <name>Zn(2+)</name>
        <dbReference type="ChEBI" id="CHEBI:29105"/>
        <note>catalytic</note>
    </ligand>
</feature>
<feature type="binding site" evidence="1">
    <location>
        <position position="287"/>
    </location>
    <ligand>
        <name>7-phospho-2-dehydro-3-deoxy-D-arabino-heptonate</name>
        <dbReference type="ChEBI" id="CHEBI:58394"/>
    </ligand>
</feature>
<feature type="binding site" evidence="1">
    <location>
        <position position="287"/>
    </location>
    <ligand>
        <name>Zn(2+)</name>
        <dbReference type="ChEBI" id="CHEBI:29105"/>
        <note>catalytic</note>
    </ligand>
</feature>
<feature type="binding site" evidence="1">
    <location>
        <position position="356"/>
    </location>
    <ligand>
        <name>7-phospho-2-dehydro-3-deoxy-D-arabino-heptonate</name>
        <dbReference type="ChEBI" id="CHEBI:58394"/>
    </ligand>
</feature>
<feature type="binding site" evidence="1">
    <location>
        <begin position="872"/>
        <end position="879"/>
    </location>
    <ligand>
        <name>ATP</name>
        <dbReference type="ChEBI" id="CHEBI:30616"/>
    </ligand>
</feature>
<proteinExistence type="inferred from homology"/>
<accession>C5FQ73</accession>
<reference key="1">
    <citation type="journal article" date="2012" name="MBio">
        <title>Comparative genome analysis of Trichophyton rubrum and related dermatophytes reveals candidate genes involved in infection.</title>
        <authorList>
            <person name="Martinez D.A."/>
            <person name="Oliver B.G."/>
            <person name="Graeser Y."/>
            <person name="Goldberg J.M."/>
            <person name="Li W."/>
            <person name="Martinez-Rossi N.M."/>
            <person name="Monod M."/>
            <person name="Shelest E."/>
            <person name="Barton R.C."/>
            <person name="Birch E."/>
            <person name="Brakhage A.A."/>
            <person name="Chen Z."/>
            <person name="Gurr S.J."/>
            <person name="Heiman D."/>
            <person name="Heitman J."/>
            <person name="Kosti I."/>
            <person name="Rossi A."/>
            <person name="Saif S."/>
            <person name="Samalova M."/>
            <person name="Saunders C.W."/>
            <person name="Shea T."/>
            <person name="Summerbell R.C."/>
            <person name="Xu J."/>
            <person name="Young S."/>
            <person name="Zeng Q."/>
            <person name="Birren B.W."/>
            <person name="Cuomo C.A."/>
            <person name="White T.C."/>
        </authorList>
    </citation>
    <scope>NUCLEOTIDE SEQUENCE [LARGE SCALE GENOMIC DNA]</scope>
    <source>
        <strain>ATCC MYA-4605 / CBS 113480</strain>
    </source>
</reference>
<sequence>MEQPTTIQILGRDSIVADFGIWRRHVARDLLETLSSSTYILISDTNIAPLYVPEFERAFEEAAAEKSPKPRLLTYKIAPGESSKGRETKAEIEDWMLSCQPPCGRDTVLIALGGGVIGDLAGFVAATYMRGIRFVQVPTTLLAMVDSSIGGKTAIDTPNGKNLIGAIWQPEKIYLDMEFLNTLPQREFTNGMAEVIKTAAISSETTFAELEQNADAIAAALKTENTPERSRFSGIQEILKRTILASARFKADVVSKDEREGGLRNLLNFGHSIGHAIEAILAPQILHGECVAIGMIKEVELARYLGILKGAAVARLAKCLTRYGLPTSLKDARIRRLSAGKKCPVDKLIAFMAVDKKNDGPMKKVVLLSAIGRTHEQKASVVSNEELKVVLAPSIEVLPGIPKPLNVTCTPPGSKSISNRALVLAALGSGVCRIRNLLHSDDTEVMLNALEALGAATFSWEEEGEVLVVNGKGGKLEASAHELYLGNAGTASRFLTTVATLSNEKDDVSHNILTGNARMKQRPIGDLVDALKSNGVSVDYLEQQGSLPLKVPACGGFKGGAIELAAKVSSQYVSSLLMCAPYAKEKVTLKLVGGKPISETYIAMTAAMMKSFGIDVEKSTTEEYTYHIQQGQYKNPPEYIIESDASSATYPLAIAAMSGTTCTIPNIGSKSLQGDARFAVDVLRPMGCDVKQTNSSTTVTGPTNGALKPIANVDMEPMTDAFLTASVLAAVANDKSGNTTRIYGIANQRVKECNRIKAMKDELAKFGVTCREHDDGIEIDGIDSSELKVPVNGVHCYDDHRVAMSFSVLAAAAASQPTLILEKECVGKTWPAWWDALAQTFKVKLDGKELVNDNVVDIQKSTKSIASIFIIGMRGAGKTTSGYSISKALNRPFIDLDTELENVEGMPIPEIIKQKGWEGFRDAELALLKRMMAEKPTGYIFACGGGIVETKEARDLLINYHKNKGNVFLIMRNIKKVIEFLEIDKTRPAYIEDMMGVWLRREPWYQECSNLQYYSHHSERSELDAALQGFTRFLNVVMGNTDHLALLKKKDHSFFVSLTLPDLQLSADILRAATFGSDAIELRVDLLKDPSSTSGVPSVGYVAEQMSFLRSHASQPLIFTIRTKAQGGQFPDDAVDKALELYKLAIRMGSEFVDLELSFPNDLLHAVTEMKGFSKIIASHHDVNSQLSWSNGSWIQYYNKALQHGDIIKLIGVAKTFEDNMALQQFKSWAEKSYPVPIIAINMGNKGRLSRILNRFMTPVSHPALPFKAAPGQVSAKDIRQALTLMGELDAKKFALFGKPISASRSPALHNALFTQAGFPHDYGLLETDKAENVEKFIRSDDFGGASVTIPLKEQIMGLLDEISPEAKIIGAVNTIVPITVSGRPPRLIGYNTDWQGMARCLKDAGAICSNNGESALTIGSGGTARAAIYSLHSMGYSPIYLVGRTPSNLSKLASSFPAEYNIQVVQDIKSVQAAPKVAISTIPGDQELENPLPELITQIMEKGQDSSRECILLDMAYKPDVTTMARLASPAGWKIIKGLEVLVAQGIYQFEHWTGLMPIYEDARAAVMNI</sequence>